<sequence>MTNSEPRRMTCDSEVVWKKLQDGLDVAYRRENMAPKDYMTLYTSVYDYCTSITLSTSRRDGEDGRAESSTPARTAGADFVGHEMYQRVEEYVKAYVIAVCEKGAELSGEDLLKYYTTEWENFRISSKVMDGIFAYLNRHWIRRELDEGHENIYMVYTLALVVWKRNLFNDLKDKVIDAMLELIRSERTGSMINSRYISGVVECLVELGVDDSETDAKKDAETKKLAVYKEFFEVKFLEATRGFYTQEAANFLSNGGNVTDYMIKVETRLNQEDDRCQLYLNSSTKTPLATCCESVLISNQLDFLQRHFGGLLVDKRDDDLSRMFKLCDRVPNGLDELRKSLENHIAKEGHQALERVAMEAATDAKLYVKTLLEVHERYQSLVNRSFKNEPGFMQSLDKAATSFINNNAVTKRAPPQAQLTKSAELLARYCDQLLRKSSKMPDEAELEELQTKIMVVFKYIDDKDVFSKFYTKMFSKRLISELSASDEAEANFITKLKSMCGYEYTARLSKMVNDTQVSKDLTADFKEKKADMLGQKSVEFNVLVLSSGSWPTFPTTPITLPQQLSKTIEIFGQFYNEKFNGRRLTWVYSQSRGEITSTAFPKKYVFTATTAQMCTMLLFNEQDSYTVEQIAAATKMDEKSAPAIVGSLIKNLVLKADTELQKEDEVPMTATVSLNKAYMNKKVRVDLSKFTMKQDAVRDTENVQKNVEEDRKSVISACIVRIMKTRKRVQHQQLMTEVITQLSGRFKPKVEMIKRCIGSLIEKEYMLRTEGQKDLYEYLA</sequence>
<keyword id="KW-0131">Cell cycle</keyword>
<keyword id="KW-0132">Cell division</keyword>
<keyword id="KW-0963">Cytoplasm</keyword>
<keyword id="KW-1017">Isopeptide bond</keyword>
<keyword id="KW-1185">Reference proteome</keyword>
<keyword id="KW-0832">Ubl conjugation</keyword>
<keyword id="KW-0833">Ubl conjugation pathway</keyword>
<comment type="function">
    <text evidence="6">Probable core component of multiple cullin-RING-based SCF (SKP1-CUL1-F-box) E3 ubiquitin-protein ligase complexes which mediate the ubiquitination and subsequent proteasomal degradation of target proteins. As a scaffold protein may contribute to catalysis through positioning of the substrate and the ubiquitin-conjugating enzyme. Required for developmentally programmed transitions from the G1 phase of the cell cycle to the G0 phase or the apoptotic pathway.</text>
</comment>
<comment type="pathway">
    <text>Protein modification; protein ubiquitination.</text>
</comment>
<comment type="subunit">
    <text evidence="4 5">Component of an SCF (SKP1-CUL1-F-box protein) E3 ubiquitin ligase complex composed of cul-1, fsn-1, rpm-1 and skr-1 (PubMed:15208641). Interacts with Skp1-related proteins skr-1, skr-2, skr-3, skr-4, skr-7, skr-8, skr-9 and skr-10 (PubMed:11864566).</text>
</comment>
<comment type="subcellular location">
    <subcellularLocation>
        <location evidence="7">Cytoplasm</location>
    </subcellularLocation>
</comment>
<comment type="tissue specificity">
    <text>Ubiquitous.</text>
</comment>
<comment type="developmental stage">
    <text>Highest levels in embryos and lower levels in larvae and adults.</text>
</comment>
<comment type="PTM">
    <text evidence="1">Neddylated; which enhances the ubiquitination activity of SCF.</text>
</comment>
<comment type="similarity">
    <text evidence="3">Belongs to the cullin family.</text>
</comment>
<protein>
    <recommendedName>
        <fullName>Cullin-1</fullName>
        <shortName>CUL-1</shortName>
    </recommendedName>
    <alternativeName>
        <fullName>Abnormal cell lineage protein 19</fullName>
    </alternativeName>
</protein>
<evidence type="ECO:0000250" key="1">
    <source>
        <dbReference type="UniProtKB" id="Q13616"/>
    </source>
</evidence>
<evidence type="ECO:0000255" key="2"/>
<evidence type="ECO:0000255" key="3">
    <source>
        <dbReference type="PROSITE-ProRule" id="PRU00330"/>
    </source>
</evidence>
<evidence type="ECO:0000269" key="4">
    <source>
    </source>
</evidence>
<evidence type="ECO:0000269" key="5">
    <source>
    </source>
</evidence>
<evidence type="ECO:0000269" key="6">
    <source>
    </source>
</evidence>
<evidence type="ECO:0000305" key="7"/>
<reference key="1">
    <citation type="journal article" date="1996" name="Cell">
        <title>cul-1 is required for cell cycle exit in C. elegans and identifies a novel gene family.</title>
        <authorList>
            <person name="Kipreos E.T."/>
            <person name="Lander L.E."/>
            <person name="Wing J.P."/>
            <person name="He W.W."/>
            <person name="Hedgecock E.M."/>
        </authorList>
    </citation>
    <scope>NUCLEOTIDE SEQUENCE [MRNA]</scope>
    <source>
        <strain>Bristol N2</strain>
    </source>
</reference>
<reference key="2">
    <citation type="journal article" date="1998" name="Science">
        <title>Genome sequence of the nematode C. elegans: a platform for investigating biology.</title>
        <authorList>
            <consortium name="The C. elegans sequencing consortium"/>
        </authorList>
    </citation>
    <scope>NUCLEOTIDE SEQUENCE [LARGE SCALE GENOMIC DNA]</scope>
    <source>
        <strain>Bristol N2</strain>
    </source>
</reference>
<reference key="3">
    <citation type="journal article" date="2002" name="Curr. Biol.">
        <title>Multiple Skp1-related proteins in Caenorhabditis elegans: diverse patterns of interaction with Cullins and F-box proteins.</title>
        <authorList>
            <person name="Yamanaka A."/>
            <person name="Yada M."/>
            <person name="Imaki H."/>
            <person name="Koga M."/>
            <person name="Ohshima Y."/>
            <person name="Nakayama K."/>
        </authorList>
    </citation>
    <scope>INTERACTION WITH SKR-1; SKR-2; SKR-3; SKR-4; SKR-7; SKR-8; SKR-9 AND SKR-10</scope>
</reference>
<reference key="4">
    <citation type="journal article" date="2004" name="Nature">
        <title>An SCF-like ubiquitin ligase complex that controls presynaptic differentiation.</title>
        <authorList>
            <person name="Liao E.H."/>
            <person name="Hung W."/>
            <person name="Abrams B."/>
            <person name="Zhen M."/>
        </authorList>
    </citation>
    <scope>INTERACTION WITH RPM-1; FSN-1 AND SKR-1</scope>
</reference>
<reference key="5">
    <citation type="journal article" date="2007" name="Proc. Natl. Acad. Sci. U.S.A.">
        <title>Regulation of Caenorhabditis elegans lifespan by a proteasomal E3 ligase complex.</title>
        <authorList>
            <person name="Ghazi A."/>
            <person name="Henis-Korenblit S."/>
            <person name="Kenyon C."/>
        </authorList>
    </citation>
    <scope>FUNCTION</scope>
</reference>
<dbReference type="EMBL" id="U58083">
    <property type="protein sequence ID" value="AAC47120.1"/>
    <property type="molecule type" value="mRNA"/>
</dbReference>
<dbReference type="EMBL" id="Z35639">
    <property type="protein sequence ID" value="CAA84695.2"/>
    <property type="molecule type" value="Genomic_DNA"/>
</dbReference>
<dbReference type="PIR" id="T20365">
    <property type="entry name" value="T20365"/>
</dbReference>
<dbReference type="RefSeq" id="NP_499309.1">
    <property type="nucleotide sequence ID" value="NM_066908.8"/>
</dbReference>
<dbReference type="SMR" id="Q17389"/>
<dbReference type="BioGRID" id="41658">
    <property type="interactions" value="37"/>
</dbReference>
<dbReference type="ComplexPortal" id="CPX-958">
    <property type="entry name" value="SCF-rpm-1 ubiquitin ligase complex"/>
</dbReference>
<dbReference type="FunCoup" id="Q17389">
    <property type="interactions" value="3524"/>
</dbReference>
<dbReference type="IntAct" id="Q17389">
    <property type="interactions" value="2"/>
</dbReference>
<dbReference type="STRING" id="6239.D2045.6.1"/>
<dbReference type="PaxDb" id="6239-D2045.6"/>
<dbReference type="PeptideAtlas" id="Q17389"/>
<dbReference type="EnsemblMetazoa" id="D2045.6.1">
    <property type="protein sequence ID" value="D2045.6.1"/>
    <property type="gene ID" value="WBGene00000836"/>
</dbReference>
<dbReference type="GeneID" id="176466"/>
<dbReference type="KEGG" id="cel:CELE_D2045.6"/>
<dbReference type="UCSC" id="D2045.6">
    <property type="organism name" value="c. elegans"/>
</dbReference>
<dbReference type="AGR" id="WB:WBGene00000836"/>
<dbReference type="CTD" id="176466"/>
<dbReference type="WormBase" id="D2045.6">
    <property type="protein sequence ID" value="CE29089"/>
    <property type="gene ID" value="WBGene00000836"/>
    <property type="gene designation" value="cul-1"/>
</dbReference>
<dbReference type="eggNOG" id="KOG2166">
    <property type="taxonomic scope" value="Eukaryota"/>
</dbReference>
<dbReference type="GeneTree" id="ENSGT00940000154774"/>
<dbReference type="HOGENOM" id="CLU_004747_6_1_1"/>
<dbReference type="InParanoid" id="Q17389"/>
<dbReference type="OMA" id="IREWDRY"/>
<dbReference type="OrthoDB" id="27073at2759"/>
<dbReference type="PhylomeDB" id="Q17389"/>
<dbReference type="Reactome" id="R-CEL-187577">
    <property type="pathway name" value="SCF(Skp2)-mediated degradation of p27/p21"/>
</dbReference>
<dbReference type="Reactome" id="R-CEL-195253">
    <property type="pathway name" value="Degradation of beta-catenin by the destruction complex"/>
</dbReference>
<dbReference type="Reactome" id="R-CEL-2565942">
    <property type="pathway name" value="Regulation of PLK1 Activity at G2/M Transition"/>
</dbReference>
<dbReference type="Reactome" id="R-CEL-68949">
    <property type="pathway name" value="Orc1 removal from chromatin"/>
</dbReference>
<dbReference type="Reactome" id="R-CEL-69231">
    <property type="pathway name" value="Cyclin D associated events in G1"/>
</dbReference>
<dbReference type="Reactome" id="R-CEL-8854050">
    <property type="pathway name" value="FBXL7 down-regulates AURKA during mitotic entry and in early mitosis"/>
</dbReference>
<dbReference type="Reactome" id="R-CEL-8939902">
    <property type="pathway name" value="Regulation of RUNX2 expression and activity"/>
</dbReference>
<dbReference type="Reactome" id="R-CEL-8951664">
    <property type="pathway name" value="Neddylation"/>
</dbReference>
<dbReference type="Reactome" id="R-CEL-917937">
    <property type="pathway name" value="Iron uptake and transport"/>
</dbReference>
<dbReference type="Reactome" id="R-CEL-9762114">
    <property type="pathway name" value="GSK3B and BTRC:CUL1-mediated-degradation of NFE2L2"/>
</dbReference>
<dbReference type="Reactome" id="R-CEL-983168">
    <property type="pathway name" value="Antigen processing: Ubiquitination &amp; Proteasome degradation"/>
</dbReference>
<dbReference type="UniPathway" id="UPA00143"/>
<dbReference type="PRO" id="PR:Q17389"/>
<dbReference type="Proteomes" id="UP000001940">
    <property type="component" value="Chromosome III"/>
</dbReference>
<dbReference type="Bgee" id="WBGene00000836">
    <property type="expression patterns" value="Expressed in embryo and 4 other cell types or tissues"/>
</dbReference>
<dbReference type="GO" id="GO:0005737">
    <property type="term" value="C:cytoplasm"/>
    <property type="evidence" value="ECO:0007669"/>
    <property type="project" value="UniProtKB-SubCell"/>
</dbReference>
<dbReference type="GO" id="GO:0019005">
    <property type="term" value="C:SCF ubiquitin ligase complex"/>
    <property type="evidence" value="ECO:0000314"/>
    <property type="project" value="ComplexPortal"/>
</dbReference>
<dbReference type="GO" id="GO:0030674">
    <property type="term" value="F:protein-macromolecule adaptor activity"/>
    <property type="evidence" value="ECO:0000318"/>
    <property type="project" value="GO_Central"/>
</dbReference>
<dbReference type="GO" id="GO:0031625">
    <property type="term" value="F:ubiquitin protein ligase binding"/>
    <property type="evidence" value="ECO:0000318"/>
    <property type="project" value="GO_Central"/>
</dbReference>
<dbReference type="GO" id="GO:0051301">
    <property type="term" value="P:cell division"/>
    <property type="evidence" value="ECO:0007669"/>
    <property type="project" value="UniProtKB-KW"/>
</dbReference>
<dbReference type="GO" id="GO:0008340">
    <property type="term" value="P:determination of adult lifespan"/>
    <property type="evidence" value="ECO:0000315"/>
    <property type="project" value="UniProtKB"/>
</dbReference>
<dbReference type="GO" id="GO:0009792">
    <property type="term" value="P:embryo development ending in birth or egg hatching"/>
    <property type="evidence" value="ECO:0000315"/>
    <property type="project" value="WormBase"/>
</dbReference>
<dbReference type="GO" id="GO:0043066">
    <property type="term" value="P:negative regulation of apoptotic process"/>
    <property type="evidence" value="ECO:0000315"/>
    <property type="project" value="WormBase"/>
</dbReference>
<dbReference type="GO" id="GO:0008285">
    <property type="term" value="P:negative regulation of cell population proliferation"/>
    <property type="evidence" value="ECO:0000315"/>
    <property type="project" value="WormBase"/>
</dbReference>
<dbReference type="GO" id="GO:0010826">
    <property type="term" value="P:negative regulation of centrosome duplication"/>
    <property type="evidence" value="ECO:0000315"/>
    <property type="project" value="UniProtKB"/>
</dbReference>
<dbReference type="GO" id="GO:0043518">
    <property type="term" value="P:negative regulation of DNA damage response, signal transduction by p53 class mediator"/>
    <property type="evidence" value="ECO:0000315"/>
    <property type="project" value="UniProtKB"/>
</dbReference>
<dbReference type="GO" id="GO:0045930">
    <property type="term" value="P:negative regulation of mitotic cell cycle"/>
    <property type="evidence" value="ECO:0000315"/>
    <property type="project" value="WormBase"/>
</dbReference>
<dbReference type="GO" id="GO:0002119">
    <property type="term" value="P:nematode larval development"/>
    <property type="evidence" value="ECO:0000315"/>
    <property type="project" value="WormBase"/>
</dbReference>
<dbReference type="GO" id="GO:0043065">
    <property type="term" value="P:positive regulation of apoptotic process"/>
    <property type="evidence" value="ECO:0000315"/>
    <property type="project" value="WormBase"/>
</dbReference>
<dbReference type="GO" id="GO:0016567">
    <property type="term" value="P:protein ubiquitination"/>
    <property type="evidence" value="ECO:0000318"/>
    <property type="project" value="GO_Central"/>
</dbReference>
<dbReference type="GO" id="GO:0008361">
    <property type="term" value="P:regulation of cell size"/>
    <property type="evidence" value="ECO:0000315"/>
    <property type="project" value="WormBase"/>
</dbReference>
<dbReference type="GO" id="GO:0031647">
    <property type="term" value="P:regulation of protein stability"/>
    <property type="evidence" value="ECO:0000315"/>
    <property type="project" value="UniProtKB"/>
</dbReference>
<dbReference type="GO" id="GO:0090128">
    <property type="term" value="P:regulation of synapse maturation"/>
    <property type="evidence" value="ECO:0000303"/>
    <property type="project" value="ComplexPortal"/>
</dbReference>
<dbReference type="GO" id="GO:0022414">
    <property type="term" value="P:reproductive process"/>
    <property type="evidence" value="ECO:0000315"/>
    <property type="project" value="WormBase"/>
</dbReference>
<dbReference type="GO" id="GO:0042594">
    <property type="term" value="P:response to starvation"/>
    <property type="evidence" value="ECO:0000315"/>
    <property type="project" value="UniProtKB"/>
</dbReference>
<dbReference type="GO" id="GO:0031146">
    <property type="term" value="P:SCF-dependent proteasomal ubiquitin-dependent protein catabolic process"/>
    <property type="evidence" value="ECO:0000318"/>
    <property type="project" value="GO_Central"/>
</dbReference>
<dbReference type="GO" id="GO:0006511">
    <property type="term" value="P:ubiquitin-dependent protein catabolic process"/>
    <property type="evidence" value="ECO:0000303"/>
    <property type="project" value="ComplexPortal"/>
</dbReference>
<dbReference type="FunFam" id="1.10.10.10:FF:000014">
    <property type="entry name" value="Cullin 1"/>
    <property type="match status" value="1"/>
</dbReference>
<dbReference type="FunFam" id="1.20.1310.10:FF:000011">
    <property type="entry name" value="Cullin 1"/>
    <property type="match status" value="1"/>
</dbReference>
<dbReference type="FunFam" id="1.20.1310.10:FF:000026">
    <property type="entry name" value="Cullin 1"/>
    <property type="match status" value="1"/>
</dbReference>
<dbReference type="FunFam" id="3.30.230.130:FF:000003">
    <property type="entry name" value="Cullin 2"/>
    <property type="match status" value="1"/>
</dbReference>
<dbReference type="FunFam" id="1.20.1310.10:FF:000029">
    <property type="entry name" value="Cullin homolog 1"/>
    <property type="match status" value="1"/>
</dbReference>
<dbReference type="FunFam" id="1.20.1310.10:FF:000002">
    <property type="entry name" value="cullin-3 isoform X1"/>
    <property type="match status" value="1"/>
</dbReference>
<dbReference type="Gene3D" id="1.20.1310.10">
    <property type="entry name" value="Cullin Repeats"/>
    <property type="match status" value="4"/>
</dbReference>
<dbReference type="Gene3D" id="3.30.230.130">
    <property type="entry name" value="Cullin, Chain C, Domain 2"/>
    <property type="match status" value="1"/>
</dbReference>
<dbReference type="Gene3D" id="1.10.10.10">
    <property type="entry name" value="Winged helix-like DNA-binding domain superfamily/Winged helix DNA-binding domain"/>
    <property type="match status" value="1"/>
</dbReference>
<dbReference type="InterPro" id="IPR045093">
    <property type="entry name" value="Cullin"/>
</dbReference>
<dbReference type="InterPro" id="IPR016157">
    <property type="entry name" value="Cullin_CS"/>
</dbReference>
<dbReference type="InterPro" id="IPR016158">
    <property type="entry name" value="Cullin_homology"/>
</dbReference>
<dbReference type="InterPro" id="IPR036317">
    <property type="entry name" value="Cullin_homology_sf"/>
</dbReference>
<dbReference type="InterPro" id="IPR001373">
    <property type="entry name" value="Cullin_N"/>
</dbReference>
<dbReference type="InterPro" id="IPR019559">
    <property type="entry name" value="Cullin_neddylation_domain"/>
</dbReference>
<dbReference type="InterPro" id="IPR016159">
    <property type="entry name" value="Cullin_repeat-like_dom_sf"/>
</dbReference>
<dbReference type="InterPro" id="IPR036388">
    <property type="entry name" value="WH-like_DNA-bd_sf"/>
</dbReference>
<dbReference type="InterPro" id="IPR036390">
    <property type="entry name" value="WH_DNA-bd_sf"/>
</dbReference>
<dbReference type="PANTHER" id="PTHR11932">
    <property type="entry name" value="CULLIN"/>
    <property type="match status" value="1"/>
</dbReference>
<dbReference type="Pfam" id="PF00888">
    <property type="entry name" value="Cullin"/>
    <property type="match status" value="1"/>
</dbReference>
<dbReference type="Pfam" id="PF10557">
    <property type="entry name" value="Cullin_Nedd8"/>
    <property type="match status" value="1"/>
</dbReference>
<dbReference type="SMART" id="SM00182">
    <property type="entry name" value="CULLIN"/>
    <property type="match status" value="1"/>
</dbReference>
<dbReference type="SMART" id="SM00884">
    <property type="entry name" value="Cullin_Nedd8"/>
    <property type="match status" value="1"/>
</dbReference>
<dbReference type="SUPFAM" id="SSF75632">
    <property type="entry name" value="Cullin homology domain"/>
    <property type="match status" value="1"/>
</dbReference>
<dbReference type="SUPFAM" id="SSF74788">
    <property type="entry name" value="Cullin repeat-like"/>
    <property type="match status" value="1"/>
</dbReference>
<dbReference type="SUPFAM" id="SSF46785">
    <property type="entry name" value="Winged helix' DNA-binding domain"/>
    <property type="match status" value="1"/>
</dbReference>
<dbReference type="PROSITE" id="PS01256">
    <property type="entry name" value="CULLIN_1"/>
    <property type="match status" value="1"/>
</dbReference>
<dbReference type="PROSITE" id="PS50069">
    <property type="entry name" value="CULLIN_2"/>
    <property type="match status" value="1"/>
</dbReference>
<gene>
    <name type="primary">cul-1</name>
    <name type="synonym">lin-19</name>
    <name type="ORF">D2045.6</name>
</gene>
<name>CUL1_CAEEL</name>
<organism>
    <name type="scientific">Caenorhabditis elegans</name>
    <dbReference type="NCBI Taxonomy" id="6239"/>
    <lineage>
        <taxon>Eukaryota</taxon>
        <taxon>Metazoa</taxon>
        <taxon>Ecdysozoa</taxon>
        <taxon>Nematoda</taxon>
        <taxon>Chromadorea</taxon>
        <taxon>Rhabditida</taxon>
        <taxon>Rhabditina</taxon>
        <taxon>Rhabditomorpha</taxon>
        <taxon>Rhabditoidea</taxon>
        <taxon>Rhabditidae</taxon>
        <taxon>Peloderinae</taxon>
        <taxon>Caenorhabditis</taxon>
    </lineage>
</organism>
<accession>Q17389</accession>
<accession>Q18985</accession>
<feature type="chain" id="PRO_0000119780" description="Cullin-1">
    <location>
        <begin position="1"/>
        <end position="780"/>
    </location>
</feature>
<feature type="domain" description="Cullin neddylation" evidence="2">
    <location>
        <begin position="710"/>
        <end position="771"/>
    </location>
</feature>
<feature type="cross-link" description="Glycyl lysine isopeptide (Lys-Gly) (interchain with G-Cter in NEDD8)" evidence="1">
    <location>
        <position position="724"/>
    </location>
</feature>
<proteinExistence type="evidence at protein level"/>